<evidence type="ECO:0000250" key="1">
    <source>
        <dbReference type="UniProtKB" id="Q5BEJ5"/>
    </source>
</evidence>
<evidence type="ECO:0000255" key="2"/>
<evidence type="ECO:0000255" key="3">
    <source>
        <dbReference type="PROSITE-ProRule" id="PRU00498"/>
    </source>
</evidence>
<evidence type="ECO:0000255" key="4">
    <source>
        <dbReference type="PROSITE-ProRule" id="PRU00718"/>
    </source>
</evidence>
<evidence type="ECO:0000269" key="5">
    <source>
    </source>
</evidence>
<evidence type="ECO:0000269" key="6">
    <source>
    </source>
</evidence>
<evidence type="ECO:0000269" key="7">
    <source>
    </source>
</evidence>
<evidence type="ECO:0000303" key="8">
    <source>
    </source>
</evidence>
<evidence type="ECO:0000305" key="9"/>
<evidence type="ECO:0000305" key="10">
    <source>
    </source>
</evidence>
<proteinExistence type="evidence at transcript level"/>
<sequence length="500" mass="54960">MHLSSSLLFTSALLAGGINASPATNAYRRQGADMRTIIGDTTPVLSNTTAVHFPGSGDFFSVTERWDVYRPPSYQAAITPTTEADIVSLVKMAKQHNIPFLATGGRHGYGTSLGKCQEGLAIDLSHFKDVKIDKQRETVTIGPGVVFADVFPVVSDAGYQVQTGTCSCVGMIGATIGAGIGRLDGVHGLVIDALESVRMITANGDIVEASKTKNPELFWGIRGAGANFGIITQATYKMHKSMGDIISFDLIYEPEQNVTLFNTVANMYLPPGLTVETIMSYNQTTEKPTIIVSSTYAGGSEAEARRWMQPLLRLNPWYKDIKAIPWKRMSKETALGLDKEVCANSQVFDIYGVNLRRHDANTWVKTFNKLAKFWNEQPAAQSSSVVLETWPNQAVVAVPDSETAYPWRDATTYVMIQMRWDAPGNPVETVADAMGRELRNDFAKTSGYNGLTVYVNYAHGDETPEQMYGRNKLHRLAKLKKQYDPSSVFGFHNPLPTSYP</sequence>
<comment type="function">
    <text evidence="5 6 7">FAD-linked oxidoreductase; part of the gene cluster that mediates the biosynthesis of sordarial, a salicylic aldehyde structurally related to the phytotoxin pyriculol (PubMed:19277664, PubMed:28485098, PubMed:30908040). The most interesting aspect of this pathway is formation of an aromatic product from the highly reducing polyketide synthase srdA (PubMed:30908040). SrdA synthesizes a reduced polyketide chain from one molecule of acetyl-CoA and five molecules of malonyl-CoA (PubMed:30908040). The polyketide chain is then reductively released as an aldehyde (PubMed:30908040). The oxidoreductases srdC, srdD and srdE then oxidize one of the hydroxy groups to facilitate the intramolecular aldol condensation, followed by dehydration to yield a salicylic aldehyde (PubMed:30908040). This aldehyde can undergo facile reduction by endogenous reductases to yield the alcohol 1-hydroxy-2-hydroxymethyl-3-pent-1,3-dienylbenzene (PubMed:30908040). The flavin-dependent srdI counteract against the propensity of the aldehydes to be reduced under physiological conditions and is responsible for reoxidizing 1-hydroxy-2-hydroxymethyl-3-pent-1,3-dienylbenzene back to the salicylic aldehyde (PubMed:30908040). This salicylic aldehyde is then selectively epoxidized by the cupin-domain-containing oxidoreductase srdB to yield the epoxide, which can be hydrolyzed stereoselectively by the hydrolase srdG to give the final product sordarial (PubMed:30908040).</text>
</comment>
<comment type="cofactor">
    <cofactor evidence="1">
        <name>FAD</name>
        <dbReference type="ChEBI" id="CHEBI:57692"/>
    </cofactor>
</comment>
<comment type="induction">
    <text evidence="5 6">Expression is up-regulated during sexual development (PubMed:19277664). Expression is also up-regulated during confrontation with the arthropod fungivore Drosophila melanogaster (PubMed:28485098).</text>
</comment>
<comment type="similarity">
    <text evidence="9">Belongs to the oxygen-dependent FAD-linked oxidoreductase family.</text>
</comment>
<comment type="caution">
    <text evidence="6 7">A recent genetics report associated srdA and its cluster with the biosynthesis of furanocoumarin neurosporin A, a metabolite produced by N.crassa for chemoresistance against predation by arthropod fungivores (PubMed:28485098). However, based on the gene cluster organization and predicted gene functions, this cluster is unlikely to be involved in neurosporin A biosynthesis, but instead produces compounds similar to pyriculol (PubMed:30908040).</text>
</comment>
<gene>
    <name evidence="8" type="primary">srdI</name>
    <name type="ORF">NCU02926</name>
</gene>
<protein>
    <recommendedName>
        <fullName evidence="8">FAD-linked oxidoreductase srdI</fullName>
        <ecNumber evidence="10">1.1.1.-</ecNumber>
    </recommendedName>
    <alternativeName>
        <fullName evidence="8">Sordarial biosynthesis cluster protein srdI</fullName>
    </alternativeName>
</protein>
<keyword id="KW-0274">FAD</keyword>
<keyword id="KW-0285">Flavoprotein</keyword>
<keyword id="KW-0325">Glycoprotein</keyword>
<keyword id="KW-0560">Oxidoreductase</keyword>
<keyword id="KW-1185">Reference proteome</keyword>
<keyword id="KW-0732">Signal</keyword>
<accession>Q7SHH8</accession>
<name>SRDI_NEUCR</name>
<feature type="signal peptide" evidence="2">
    <location>
        <begin position="1"/>
        <end position="20"/>
    </location>
</feature>
<feature type="chain" id="PRO_5004291308" description="FAD-linked oxidoreductase srdI" evidence="2">
    <location>
        <begin position="21"/>
        <end position="500"/>
    </location>
</feature>
<feature type="domain" description="FAD-binding PCMH-type" evidence="4">
    <location>
        <begin position="69"/>
        <end position="241"/>
    </location>
</feature>
<feature type="glycosylation site" description="N-linked (GlcNAc...) asparagine" evidence="3">
    <location>
        <position position="47"/>
    </location>
</feature>
<feature type="glycosylation site" description="N-linked (GlcNAc...) asparagine" evidence="3">
    <location>
        <position position="257"/>
    </location>
</feature>
<feature type="glycosylation site" description="N-linked (GlcNAc...) asparagine" evidence="3">
    <location>
        <position position="282"/>
    </location>
</feature>
<reference key="1">
    <citation type="journal article" date="2003" name="Nature">
        <title>The genome sequence of the filamentous fungus Neurospora crassa.</title>
        <authorList>
            <person name="Galagan J.E."/>
            <person name="Calvo S.E."/>
            <person name="Borkovich K.A."/>
            <person name="Selker E.U."/>
            <person name="Read N.D."/>
            <person name="Jaffe D.B."/>
            <person name="FitzHugh W."/>
            <person name="Ma L.-J."/>
            <person name="Smirnov S."/>
            <person name="Purcell S."/>
            <person name="Rehman B."/>
            <person name="Elkins T."/>
            <person name="Engels R."/>
            <person name="Wang S."/>
            <person name="Nielsen C.B."/>
            <person name="Butler J."/>
            <person name="Endrizzi M."/>
            <person name="Qui D."/>
            <person name="Ianakiev P."/>
            <person name="Bell-Pedersen D."/>
            <person name="Nelson M.A."/>
            <person name="Werner-Washburne M."/>
            <person name="Selitrennikoff C.P."/>
            <person name="Kinsey J.A."/>
            <person name="Braun E.L."/>
            <person name="Zelter A."/>
            <person name="Schulte U."/>
            <person name="Kothe G.O."/>
            <person name="Jedd G."/>
            <person name="Mewes H.-W."/>
            <person name="Staben C."/>
            <person name="Marcotte E."/>
            <person name="Greenberg D."/>
            <person name="Roy A."/>
            <person name="Foley K."/>
            <person name="Naylor J."/>
            <person name="Stange-Thomann N."/>
            <person name="Barrett R."/>
            <person name="Gnerre S."/>
            <person name="Kamal M."/>
            <person name="Kamvysselis M."/>
            <person name="Mauceli E.W."/>
            <person name="Bielke C."/>
            <person name="Rudd S."/>
            <person name="Frishman D."/>
            <person name="Krystofova S."/>
            <person name="Rasmussen C."/>
            <person name="Metzenberg R.L."/>
            <person name="Perkins D.D."/>
            <person name="Kroken S."/>
            <person name="Cogoni C."/>
            <person name="Macino G."/>
            <person name="Catcheside D.E.A."/>
            <person name="Li W."/>
            <person name="Pratt R.J."/>
            <person name="Osmani S.A."/>
            <person name="DeSouza C.P.C."/>
            <person name="Glass N.L."/>
            <person name="Orbach M.J."/>
            <person name="Berglund J.A."/>
            <person name="Voelker R."/>
            <person name="Yarden O."/>
            <person name="Plamann M."/>
            <person name="Seiler S."/>
            <person name="Dunlap J.C."/>
            <person name="Radford A."/>
            <person name="Aramayo R."/>
            <person name="Natvig D.O."/>
            <person name="Alex L.A."/>
            <person name="Mannhaupt G."/>
            <person name="Ebbole D.J."/>
            <person name="Freitag M."/>
            <person name="Paulsen I."/>
            <person name="Sachs M.S."/>
            <person name="Lander E.S."/>
            <person name="Nusbaum C."/>
            <person name="Birren B.W."/>
        </authorList>
    </citation>
    <scope>NUCLEOTIDE SEQUENCE [LARGE SCALE GENOMIC DNA]</scope>
    <source>
        <strain>ATCC 24698 / 74-OR23-1A / CBS 708.71 / DSM 1257 / FGSC 987</strain>
    </source>
</reference>
<reference key="2">
    <citation type="journal article" date="2009" name="Curr. Genet.">
        <title>A novel polyketide biosynthesis gene cluster is involved in fruiting body morphogenesis in the filamentous fungi Sordaria macrospora and Neurospora crassa.</title>
        <authorList>
            <person name="Nowrousian M."/>
        </authorList>
    </citation>
    <scope>FUNCTION</scope>
    <scope>INDUCTION</scope>
</reference>
<reference key="3">
    <citation type="journal article" date="2017" name="Environ. Microbiol.">
        <title>Production of a fungal furocoumarin by a polyketide synthase gene cluster confers the chemo-resistance of Neurospora crassa to the predation by fungivorous arthropods.</title>
        <authorList>
            <person name="Zhao Y."/>
            <person name="Ding J."/>
            <person name="Yuan W."/>
            <person name="Huang J."/>
            <person name="Huang W."/>
            <person name="Wang Y."/>
            <person name="Zheng W."/>
        </authorList>
    </citation>
    <scope>FUNCTION</scope>
    <scope>INDUCTION</scope>
</reference>
<reference key="4">
    <citation type="journal article" date="2019" name="J. Nat. Prod.">
        <title>Genome mining reveals Neurospora crassa can produce the salicylaldehyde sordarial.</title>
        <authorList>
            <person name="Zhao Z."/>
            <person name="Ying Y."/>
            <person name="Hung Y.S."/>
            <person name="Tang Y."/>
        </authorList>
    </citation>
    <scope>FUNCTION</scope>
    <scope>PATHWAY</scope>
</reference>
<dbReference type="EC" id="1.1.1.-" evidence="10"/>
<dbReference type="EMBL" id="CM002236">
    <property type="protein sequence ID" value="EAA36372.1"/>
    <property type="molecule type" value="Genomic_DNA"/>
</dbReference>
<dbReference type="RefSeq" id="XP_965608.1">
    <property type="nucleotide sequence ID" value="XM_960515.2"/>
</dbReference>
<dbReference type="SMR" id="Q7SHH8"/>
<dbReference type="STRING" id="367110.Q7SHH8"/>
<dbReference type="GlyCosmos" id="Q7SHH8">
    <property type="glycosylation" value="3 sites, No reported glycans"/>
</dbReference>
<dbReference type="PaxDb" id="5141-EFNCRP00000002392"/>
<dbReference type="EnsemblFungi" id="EAA36372">
    <property type="protein sequence ID" value="EAA36372"/>
    <property type="gene ID" value="NCU02926"/>
</dbReference>
<dbReference type="GeneID" id="3881733"/>
<dbReference type="KEGG" id="ncr:NCU02926"/>
<dbReference type="VEuPathDB" id="FungiDB:NCU02926"/>
<dbReference type="HOGENOM" id="CLU_018354_0_0_1"/>
<dbReference type="InParanoid" id="Q7SHH8"/>
<dbReference type="OMA" id="MAKQHNI"/>
<dbReference type="OrthoDB" id="415825at2759"/>
<dbReference type="Proteomes" id="UP000001805">
    <property type="component" value="Chromosome 1, Linkage Group I"/>
</dbReference>
<dbReference type="GO" id="GO:0071949">
    <property type="term" value="F:FAD binding"/>
    <property type="evidence" value="ECO:0007669"/>
    <property type="project" value="InterPro"/>
</dbReference>
<dbReference type="GO" id="GO:0016491">
    <property type="term" value="F:oxidoreductase activity"/>
    <property type="evidence" value="ECO:0000318"/>
    <property type="project" value="GO_Central"/>
</dbReference>
<dbReference type="Gene3D" id="3.30.465.10">
    <property type="match status" value="1"/>
</dbReference>
<dbReference type="Gene3D" id="3.40.462.20">
    <property type="match status" value="1"/>
</dbReference>
<dbReference type="InterPro" id="IPR012951">
    <property type="entry name" value="BBE"/>
</dbReference>
<dbReference type="InterPro" id="IPR016166">
    <property type="entry name" value="FAD-bd_PCMH"/>
</dbReference>
<dbReference type="InterPro" id="IPR036318">
    <property type="entry name" value="FAD-bd_PCMH-like_sf"/>
</dbReference>
<dbReference type="InterPro" id="IPR016169">
    <property type="entry name" value="FAD-bd_PCMH_sub2"/>
</dbReference>
<dbReference type="InterPro" id="IPR050416">
    <property type="entry name" value="FAD-linked_Oxidoreductase"/>
</dbReference>
<dbReference type="InterPro" id="IPR006094">
    <property type="entry name" value="Oxid_FAD_bind_N"/>
</dbReference>
<dbReference type="PANTHER" id="PTHR42973">
    <property type="entry name" value="BINDING OXIDOREDUCTASE, PUTATIVE (AFU_ORTHOLOGUE AFUA_1G17690)-RELATED"/>
    <property type="match status" value="1"/>
</dbReference>
<dbReference type="PANTHER" id="PTHR42973:SF32">
    <property type="entry name" value="FAD-LINKED OXIDOREDUCTASE AFOF"/>
    <property type="match status" value="1"/>
</dbReference>
<dbReference type="Pfam" id="PF08031">
    <property type="entry name" value="BBE"/>
    <property type="match status" value="1"/>
</dbReference>
<dbReference type="Pfam" id="PF01565">
    <property type="entry name" value="FAD_binding_4"/>
    <property type="match status" value="1"/>
</dbReference>
<dbReference type="SUPFAM" id="SSF56176">
    <property type="entry name" value="FAD-binding/transporter-associated domain-like"/>
    <property type="match status" value="1"/>
</dbReference>
<dbReference type="PROSITE" id="PS51387">
    <property type="entry name" value="FAD_PCMH"/>
    <property type="match status" value="1"/>
</dbReference>
<organism>
    <name type="scientific">Neurospora crassa (strain ATCC 24698 / 74-OR23-1A / CBS 708.71 / DSM 1257 / FGSC 987)</name>
    <dbReference type="NCBI Taxonomy" id="367110"/>
    <lineage>
        <taxon>Eukaryota</taxon>
        <taxon>Fungi</taxon>
        <taxon>Dikarya</taxon>
        <taxon>Ascomycota</taxon>
        <taxon>Pezizomycotina</taxon>
        <taxon>Sordariomycetes</taxon>
        <taxon>Sordariomycetidae</taxon>
        <taxon>Sordariales</taxon>
        <taxon>Sordariaceae</taxon>
        <taxon>Neurospora</taxon>
    </lineage>
</organism>